<sequence length="110" mass="12092">MVVLKVCLVLLFLVGGTTSANLRLSKLGLLMKSDHQHSNDDESSKPCCDQCACTKSNPPQCRCSDMRLNSCHSACKSCICALSYPAQCFCVDITDFCYEPCKPSEDDKEN</sequence>
<reference key="1">
    <citation type="journal article" date="1993" name="Plant Physiol.">
        <title>Nucleotide sequence of a cDNA encoding soybean Bowman-Birk proteinase inhibitor.</title>
        <authorList>
            <person name="Baek J.M."/>
            <person name="Kim S.I."/>
        </authorList>
    </citation>
    <scope>NUCLEOTIDE SEQUENCE [MRNA]</scope>
    <source>
        <tissue>Seed</tissue>
    </source>
</reference>
<reference key="2">
    <citation type="journal article" date="1984" name="J. Biol. Chem.">
        <title>Molecular cloning and analysis of a gene coding for the Bowman-Birk protease inhibitor in soybean.</title>
        <authorList>
            <person name="Hammond R.W."/>
            <person name="Foard D.E."/>
            <person name="Larkins B.A."/>
        </authorList>
    </citation>
    <scope>NUCLEOTIDE SEQUENCE [MRNA] OF 69-110</scope>
</reference>
<reference key="3">
    <citation type="journal article" date="1985" name="J. Biol. Chem.">
        <authorList>
            <person name="Hammond R.W."/>
            <person name="Foard D.E."/>
            <person name="Larkins B.A."/>
        </authorList>
    </citation>
    <scope>ERRATUM OF PUBMED:6086657</scope>
</reference>
<reference key="4">
    <citation type="journal article" date="1972" name="J. Biochem.">
        <title>Studies on soybean trypsin inhibitors. IV. Complete amino acid sequence and the anti-proteinase sites of Bowman-Birk soybean proteinase inhibitor.</title>
        <authorList>
            <person name="Odani S."/>
            <person name="Ikenaka T."/>
        </authorList>
    </citation>
    <scope>PROTEIN SEQUENCE OF 40-110</scope>
</reference>
<reference key="5">
    <citation type="journal article" date="1973" name="J. Biochem.">
        <title>Studies on soybean trypsin inhibitors. 8. Disulfide bridges in soybean Bowman-Birk proteinase inhibitor.</title>
        <authorList>
            <person name="Odani S."/>
            <person name="Ikenaka T."/>
        </authorList>
    </citation>
    <scope>DISULFIDE BONDS</scope>
</reference>
<reference key="6">
    <citation type="journal article" date="1973" name="J. Biochem.">
        <title>Scission of soybean Bowman-Birk proteinase inhibitor into two small fragments having either trypsin or chymotrypsin inhibitory activity.</title>
        <authorList>
            <person name="Odani S."/>
            <person name="Ikenaka T."/>
        </authorList>
    </citation>
    <scope>DOMAINS</scope>
</reference>
<reference key="7">
    <citation type="journal article" date="1996" name="Eur. J. Biochem.">
        <title>Crystal structure of the bifunctional soybean Bowman-Birk inhibitor at 0.28-nm resolution. Structural peculiarities in a folded protein conformation.</title>
        <authorList>
            <person name="Voss R.-H."/>
            <person name="Ermler U."/>
            <person name="Essen L.-O."/>
            <person name="Wenzl G."/>
            <person name="Kim Y.M."/>
            <person name="Flecker P."/>
        </authorList>
    </citation>
    <scope>X-RAY CRYSTALLOGRAPHY (2.8 ANGSTROMS)</scope>
</reference>
<reference key="8">
    <citation type="journal article" date="1991" name="Biochemistry">
        <title>1H assignments and secondary structure determination of the soybean trypsin/chymotrypsin Bowman-Birk inhibitor.</title>
        <authorList>
            <person name="Werner M.H."/>
            <person name="Wemmer D.E."/>
        </authorList>
    </citation>
    <scope>STRUCTURE BY NMR</scope>
</reference>
<proteinExistence type="evidence at protein level"/>
<keyword id="KW-0002">3D-structure</keyword>
<keyword id="KW-0903">Direct protein sequencing</keyword>
<keyword id="KW-1015">Disulfide bond</keyword>
<keyword id="KW-0646">Protease inhibitor</keyword>
<keyword id="KW-1185">Reference proteome</keyword>
<keyword id="KW-0722">Serine protease inhibitor</keyword>
<keyword id="KW-0732">Signal</keyword>
<accession>P01055</accession>
<dbReference type="EMBL" id="X68704">
    <property type="protein sequence ID" value="CAA48655.1"/>
    <property type="molecule type" value="mRNA"/>
</dbReference>
<dbReference type="EMBL" id="K01968">
    <property type="protein sequence ID" value="AAA19613.1"/>
    <property type="molecule type" value="mRNA"/>
</dbReference>
<dbReference type="PIR" id="JC2226">
    <property type="entry name" value="TISYO"/>
</dbReference>
<dbReference type="RefSeq" id="NP_001238547.1">
    <property type="nucleotide sequence ID" value="NM_001251618.1"/>
</dbReference>
<dbReference type="PDB" id="1BBI">
    <property type="method" value="NMR"/>
    <property type="chains" value="A=40-110"/>
</dbReference>
<dbReference type="PDB" id="1D6R">
    <property type="method" value="X-ray"/>
    <property type="resolution" value="2.30 A"/>
    <property type="chains" value="I=45-102"/>
</dbReference>
<dbReference type="PDB" id="1K9B">
    <property type="method" value="X-ray"/>
    <property type="resolution" value="2.80 A"/>
    <property type="chains" value="A=45-102"/>
</dbReference>
<dbReference type="PDB" id="2BBI">
    <property type="method" value="NMR"/>
    <property type="chains" value="A=40-110"/>
</dbReference>
<dbReference type="PDB" id="5J4Q">
    <property type="method" value="X-ray"/>
    <property type="resolution" value="2.30 A"/>
    <property type="chains" value="B=40-110"/>
</dbReference>
<dbReference type="PDB" id="5J4S">
    <property type="method" value="X-ray"/>
    <property type="resolution" value="2.10 A"/>
    <property type="chains" value="B=40-110"/>
</dbReference>
<dbReference type="PDBsum" id="1BBI"/>
<dbReference type="PDBsum" id="1D6R"/>
<dbReference type="PDBsum" id="1K9B"/>
<dbReference type="PDBsum" id="2BBI"/>
<dbReference type="PDBsum" id="5J4Q"/>
<dbReference type="PDBsum" id="5J4S"/>
<dbReference type="BMRB" id="P01055"/>
<dbReference type="PCDDB" id="P01055"/>
<dbReference type="SMR" id="P01055"/>
<dbReference type="BioGRID" id="989806">
    <property type="interactions" value="1"/>
</dbReference>
<dbReference type="MINT" id="P01055"/>
<dbReference type="STRING" id="3847.P01055"/>
<dbReference type="MEROPS" id="I12.001"/>
<dbReference type="PaxDb" id="3847-GLYMA09G28700.1"/>
<dbReference type="GeneID" id="548083"/>
<dbReference type="KEGG" id="gmx:548083"/>
<dbReference type="InParanoid" id="P01055"/>
<dbReference type="OrthoDB" id="1928998at2759"/>
<dbReference type="EvolutionaryTrace" id="P01055"/>
<dbReference type="Proteomes" id="UP000008827">
    <property type="component" value="Unplaced"/>
</dbReference>
<dbReference type="GO" id="GO:0005576">
    <property type="term" value="C:extracellular region"/>
    <property type="evidence" value="ECO:0007669"/>
    <property type="project" value="InterPro"/>
</dbReference>
<dbReference type="GO" id="GO:0004867">
    <property type="term" value="F:serine-type endopeptidase inhibitor activity"/>
    <property type="evidence" value="ECO:0007669"/>
    <property type="project" value="UniProtKB-KW"/>
</dbReference>
<dbReference type="CDD" id="cd00023">
    <property type="entry name" value="BBI"/>
    <property type="match status" value="1"/>
</dbReference>
<dbReference type="FunFam" id="2.10.69.10:FF:000001">
    <property type="entry name" value="Bowman-Birk type proteinase inhibitor"/>
    <property type="match status" value="1"/>
</dbReference>
<dbReference type="Gene3D" id="2.10.69.10">
    <property type="entry name" value="Cysteine Protease (Bromelain) Inhibitor, subunit H"/>
    <property type="match status" value="1"/>
</dbReference>
<dbReference type="InterPro" id="IPR035995">
    <property type="entry name" value="Bowman-Birk_prot_inh"/>
</dbReference>
<dbReference type="InterPro" id="IPR000877">
    <property type="entry name" value="Prot_inh_BBI"/>
</dbReference>
<dbReference type="PANTHER" id="PTHR33479">
    <property type="entry name" value="BOWMAN-BIRK TYPE BRAN TRYPSIN INHIBITOR"/>
    <property type="match status" value="1"/>
</dbReference>
<dbReference type="PANTHER" id="PTHR33479:SF19">
    <property type="entry name" value="BOWMAN-BIRK TYPE PROTEINASE INHIBITOR C-II"/>
    <property type="match status" value="1"/>
</dbReference>
<dbReference type="Pfam" id="PF00228">
    <property type="entry name" value="Bowman-Birk_leg"/>
    <property type="match status" value="2"/>
</dbReference>
<dbReference type="SMART" id="SM00269">
    <property type="entry name" value="BowB"/>
    <property type="match status" value="1"/>
</dbReference>
<dbReference type="SUPFAM" id="SSF57247">
    <property type="entry name" value="Bowman-Birk inhibitor, BBI"/>
    <property type="match status" value="1"/>
</dbReference>
<dbReference type="PROSITE" id="PS00281">
    <property type="entry name" value="BOWMAN_BIRK"/>
    <property type="match status" value="1"/>
</dbReference>
<comment type="function">
    <text>Inhibitor of trypsin and of chymotrypsin.</text>
</comment>
<comment type="developmental stage">
    <text>This protein is apparently expressed only in developing seeds.</text>
</comment>
<comment type="similarity">
    <text evidence="4">Belongs to the Bowman-Birk serine protease inhibitor family.</text>
</comment>
<evidence type="ECO:0000255" key="1"/>
<evidence type="ECO:0000269" key="2">
    <source>
    </source>
</evidence>
<evidence type="ECO:0000269" key="3">
    <source>
    </source>
</evidence>
<evidence type="ECO:0000305" key="4"/>
<evidence type="ECO:0007829" key="5">
    <source>
        <dbReference type="PDB" id="1BBI"/>
    </source>
</evidence>
<evidence type="ECO:0007829" key="6">
    <source>
        <dbReference type="PDB" id="1D6R"/>
    </source>
</evidence>
<evidence type="ECO:0007829" key="7">
    <source>
        <dbReference type="PDB" id="5J4S"/>
    </source>
</evidence>
<protein>
    <recommendedName>
        <fullName>Bowman-Birk type proteinase inhibitor</fullName>
        <shortName>BBI</shortName>
    </recommendedName>
</protein>
<name>IBB1_SOYBN</name>
<organism>
    <name type="scientific">Glycine max</name>
    <name type="common">Soybean</name>
    <name type="synonym">Glycine hispida</name>
    <dbReference type="NCBI Taxonomy" id="3847"/>
    <lineage>
        <taxon>Eukaryota</taxon>
        <taxon>Viridiplantae</taxon>
        <taxon>Streptophyta</taxon>
        <taxon>Embryophyta</taxon>
        <taxon>Tracheophyta</taxon>
        <taxon>Spermatophyta</taxon>
        <taxon>Magnoliopsida</taxon>
        <taxon>eudicotyledons</taxon>
        <taxon>Gunneridae</taxon>
        <taxon>Pentapetalae</taxon>
        <taxon>rosids</taxon>
        <taxon>fabids</taxon>
        <taxon>Fabales</taxon>
        <taxon>Fabaceae</taxon>
        <taxon>Papilionoideae</taxon>
        <taxon>50 kb inversion clade</taxon>
        <taxon>NPAAA clade</taxon>
        <taxon>indigoferoid/millettioid clade</taxon>
        <taxon>Phaseoleae</taxon>
        <taxon>Glycine</taxon>
        <taxon>Glycine subgen. Soja</taxon>
    </lineage>
</organism>
<feature type="signal peptide" evidence="1">
    <location>
        <begin position="1"/>
        <end position="19"/>
    </location>
</feature>
<feature type="propeptide" id="PRO_0000003280" evidence="2">
    <location>
        <begin position="20"/>
        <end position="39"/>
    </location>
</feature>
<feature type="chain" id="PRO_0000003281" description="Bowman-Birk type proteinase inhibitor">
    <location>
        <begin position="40"/>
        <end position="110"/>
    </location>
</feature>
<feature type="site" description="Reactive bond for trypsin">
    <location>
        <begin position="55"/>
        <end position="56"/>
    </location>
</feature>
<feature type="site" description="Reactive bond for chymotrypsin">
    <location>
        <begin position="82"/>
        <end position="83"/>
    </location>
</feature>
<feature type="disulfide bond" evidence="3">
    <location>
        <begin position="47"/>
        <end position="101"/>
    </location>
</feature>
<feature type="disulfide bond" evidence="3">
    <location>
        <begin position="48"/>
        <end position="63"/>
    </location>
</feature>
<feature type="disulfide bond" evidence="3">
    <location>
        <begin position="51"/>
        <end position="97"/>
    </location>
</feature>
<feature type="disulfide bond" evidence="3">
    <location>
        <begin position="53"/>
        <end position="61"/>
    </location>
</feature>
<feature type="disulfide bond" evidence="3">
    <location>
        <begin position="71"/>
        <end position="78"/>
    </location>
</feature>
<feature type="disulfide bond" evidence="3">
    <location>
        <begin position="75"/>
        <end position="90"/>
    </location>
</feature>
<feature type="disulfide bond" evidence="3">
    <location>
        <begin position="80"/>
        <end position="88"/>
    </location>
</feature>
<feature type="strand" evidence="6">
    <location>
        <begin position="49"/>
        <end position="58"/>
    </location>
</feature>
<feature type="strand" evidence="6">
    <location>
        <begin position="61"/>
        <end position="63"/>
    </location>
</feature>
<feature type="strand" evidence="7">
    <location>
        <begin position="67"/>
        <end position="70"/>
    </location>
</feature>
<feature type="strand" evidence="7">
    <location>
        <begin position="76"/>
        <end position="85"/>
    </location>
</feature>
<feature type="strand" evidence="7">
    <location>
        <begin position="87"/>
        <end position="90"/>
    </location>
</feature>
<feature type="strand" evidence="7">
    <location>
        <begin position="94"/>
        <end position="96"/>
    </location>
</feature>
<feature type="strand" evidence="5">
    <location>
        <begin position="104"/>
        <end position="106"/>
    </location>
</feature>